<name>Y1129_THEM4</name>
<evidence type="ECO:0000255" key="1">
    <source>
        <dbReference type="HAMAP-Rule" id="MF_00338"/>
    </source>
</evidence>
<comment type="similarity">
    <text evidence="1">Belongs to the UPF0145 family.</text>
</comment>
<organism>
    <name type="scientific">Thermosipho melanesiensis (strain DSM 12029 / CIP 104789 / BI429)</name>
    <dbReference type="NCBI Taxonomy" id="391009"/>
    <lineage>
        <taxon>Bacteria</taxon>
        <taxon>Thermotogati</taxon>
        <taxon>Thermotogota</taxon>
        <taxon>Thermotogae</taxon>
        <taxon>Thermotogales</taxon>
        <taxon>Fervidobacteriaceae</taxon>
        <taxon>Thermosipho</taxon>
    </lineage>
</organism>
<dbReference type="EMBL" id="CP000716">
    <property type="protein sequence ID" value="ABR30984.1"/>
    <property type="molecule type" value="Genomic_DNA"/>
</dbReference>
<dbReference type="RefSeq" id="WP_012057343.1">
    <property type="nucleotide sequence ID" value="NC_009616.1"/>
</dbReference>
<dbReference type="SMR" id="A6LM33"/>
<dbReference type="STRING" id="391009.Tmel_1129"/>
<dbReference type="KEGG" id="tme:Tmel_1129"/>
<dbReference type="eggNOG" id="COG0393">
    <property type="taxonomic scope" value="Bacteria"/>
</dbReference>
<dbReference type="HOGENOM" id="CLU_117144_1_2_0"/>
<dbReference type="OrthoDB" id="9796448at2"/>
<dbReference type="Proteomes" id="UP000001110">
    <property type="component" value="Chromosome"/>
</dbReference>
<dbReference type="Gene3D" id="3.30.110.70">
    <property type="entry name" value="Hypothetical protein apc22750. Chain B"/>
    <property type="match status" value="1"/>
</dbReference>
<dbReference type="HAMAP" id="MF_00338">
    <property type="entry name" value="UPF0145"/>
    <property type="match status" value="1"/>
</dbReference>
<dbReference type="InterPro" id="IPR035439">
    <property type="entry name" value="UPF0145_dom_sf"/>
</dbReference>
<dbReference type="InterPro" id="IPR002765">
    <property type="entry name" value="UPF0145_YbjQ-like"/>
</dbReference>
<dbReference type="PANTHER" id="PTHR34068:SF2">
    <property type="entry name" value="UPF0145 PROTEIN SCO3412"/>
    <property type="match status" value="1"/>
</dbReference>
<dbReference type="PANTHER" id="PTHR34068">
    <property type="entry name" value="UPF0145 PROTEIN YBJQ"/>
    <property type="match status" value="1"/>
</dbReference>
<dbReference type="Pfam" id="PF01906">
    <property type="entry name" value="YbjQ_1"/>
    <property type="match status" value="1"/>
</dbReference>
<dbReference type="SUPFAM" id="SSF117782">
    <property type="entry name" value="YbjQ-like"/>
    <property type="match status" value="1"/>
</dbReference>
<feature type="chain" id="PRO_1000013035" description="UPF0145 protein Tmel_1129">
    <location>
        <begin position="1"/>
        <end position="108"/>
    </location>
</feature>
<gene>
    <name type="ordered locus">Tmel_1129</name>
</gene>
<reference key="1">
    <citation type="submission" date="2007-05" db="EMBL/GenBank/DDBJ databases">
        <title>Complete sequence of Thermosipho melanesiensis BI429.</title>
        <authorList>
            <consortium name="US DOE Joint Genome Institute"/>
            <person name="Copeland A."/>
            <person name="Lucas S."/>
            <person name="Lapidus A."/>
            <person name="Barry K."/>
            <person name="Glavina del Rio T."/>
            <person name="Dalin E."/>
            <person name="Tice H."/>
            <person name="Pitluck S."/>
            <person name="Chertkov O."/>
            <person name="Brettin T."/>
            <person name="Bruce D."/>
            <person name="Detter J.C."/>
            <person name="Han C."/>
            <person name="Schmutz J."/>
            <person name="Larimer F."/>
            <person name="Land M."/>
            <person name="Hauser L."/>
            <person name="Kyrpides N."/>
            <person name="Mikhailova N."/>
            <person name="Nelson K."/>
            <person name="Gogarten J.P."/>
            <person name="Noll K."/>
            <person name="Richardson P."/>
        </authorList>
    </citation>
    <scope>NUCLEOTIDE SEQUENCE [LARGE SCALE GENOMIC DNA]</scope>
    <source>
        <strain>DSM 12029 / CIP 104789 / BI429</strain>
    </source>
</reference>
<proteinExistence type="inferred from homology"/>
<protein>
    <recommendedName>
        <fullName evidence="1">UPF0145 protein Tmel_1129</fullName>
    </recommendedName>
</protein>
<accession>A6LM33</accession>
<sequence>MIISTTDKIPGYKIKEITGIVMGNIVHSKHLGKDIAAAFKTLAGGEIKSYTEMMTEARNKAIERMIDEAEKLGADAIVSVRFSSSAIMSGAAEILVYGTAVKLLPKDI</sequence>